<name>M23M_CONTS</name>
<dbReference type="EMBL" id="AF214939">
    <property type="protein sequence ID" value="AAG60367.1"/>
    <property type="molecule type" value="mRNA"/>
</dbReference>
<dbReference type="ConoServer" id="626">
    <property type="toxin name" value="Ts3.2 precursor"/>
</dbReference>
<dbReference type="GO" id="GO:0005576">
    <property type="term" value="C:extracellular region"/>
    <property type="evidence" value="ECO:0007669"/>
    <property type="project" value="UniProtKB-SubCell"/>
</dbReference>
<dbReference type="GO" id="GO:0008200">
    <property type="term" value="F:ion channel inhibitor activity"/>
    <property type="evidence" value="ECO:0007669"/>
    <property type="project" value="InterPro"/>
</dbReference>
<dbReference type="GO" id="GO:0090729">
    <property type="term" value="F:toxin activity"/>
    <property type="evidence" value="ECO:0007669"/>
    <property type="project" value="UniProtKB-KW"/>
</dbReference>
<dbReference type="InterPro" id="IPR017896">
    <property type="entry name" value="4Fe4S_Fe-S-bd"/>
</dbReference>
<dbReference type="InterPro" id="IPR004214">
    <property type="entry name" value="Conotoxin"/>
</dbReference>
<dbReference type="Pfam" id="PF02950">
    <property type="entry name" value="Conotoxin"/>
    <property type="match status" value="1"/>
</dbReference>
<accession>Q9BPI5</accession>
<sequence>MMSKLGVLLTICLLLFPLTAVSLDGDQPADLPELRAQDFAPERSPWFDPVRRCCSQDCRVCIPCCPY</sequence>
<reference key="1">
    <citation type="journal article" date="2001" name="Mol. Biol. Evol.">
        <title>Mechanisms for evolving hypervariability: the case of conopeptides.</title>
        <authorList>
            <person name="Conticello S.G."/>
            <person name="Gilad Y."/>
            <person name="Avidan N."/>
            <person name="Ben-Asher E."/>
            <person name="Levy Z."/>
            <person name="Fainzilber M."/>
        </authorList>
    </citation>
    <scope>NUCLEOTIDE SEQUENCE [MRNA]</scope>
    <source>
        <tissue>Venom duct</tissue>
    </source>
</reference>
<comment type="subcellular location">
    <subcellularLocation>
        <location evidence="1">Secreted</location>
    </subcellularLocation>
</comment>
<comment type="tissue specificity">
    <text>Expressed by the venom duct.</text>
</comment>
<comment type="domain">
    <text>The cysteine framework is III (CC-C-C-CC). Classified in the M-2 branch, since 2 residues stand between the fourth and the fifth cysteine residues.</text>
</comment>
<comment type="similarity">
    <text evidence="4">Belongs to the conotoxin M superfamily.</text>
</comment>
<proteinExistence type="evidence at transcript level"/>
<feature type="signal peptide" evidence="3">
    <location>
        <begin position="1"/>
        <end position="22"/>
    </location>
</feature>
<feature type="propeptide" id="PRO_0000404918" evidence="1">
    <location>
        <begin position="23"/>
        <end position="50"/>
    </location>
</feature>
<feature type="peptide" id="PRO_0000404919" description="Conotoxin TsMMSK-B022">
    <location>
        <begin position="53"/>
        <end position="67"/>
    </location>
</feature>
<feature type="modified residue" description="4-hydroxyproline" evidence="1">
    <location>
        <position position="63"/>
    </location>
</feature>
<feature type="disulfide bond" evidence="2">
    <location>
        <begin position="53"/>
        <end position="65"/>
    </location>
</feature>
<feature type="disulfide bond" evidence="2">
    <location>
        <begin position="54"/>
        <end position="61"/>
    </location>
</feature>
<feature type="disulfide bond" evidence="2">
    <location>
        <begin position="58"/>
        <end position="64"/>
    </location>
</feature>
<protein>
    <recommendedName>
        <fullName>Conotoxin TsMMSK-B022</fullName>
    </recommendedName>
    <alternativeName>
        <fullName>Conotoxin TsMMSK-B023</fullName>
    </alternativeName>
</protein>
<organism>
    <name type="scientific">Conus tessulatus</name>
    <name type="common">Tessellate cone</name>
    <dbReference type="NCBI Taxonomy" id="101317"/>
    <lineage>
        <taxon>Eukaryota</taxon>
        <taxon>Metazoa</taxon>
        <taxon>Spiralia</taxon>
        <taxon>Lophotrochozoa</taxon>
        <taxon>Mollusca</taxon>
        <taxon>Gastropoda</taxon>
        <taxon>Caenogastropoda</taxon>
        <taxon>Neogastropoda</taxon>
        <taxon>Conoidea</taxon>
        <taxon>Conidae</taxon>
        <taxon>Conus</taxon>
        <taxon>Tesselliconus</taxon>
    </lineage>
</organism>
<keyword id="KW-0165">Cleavage on pair of basic residues</keyword>
<keyword id="KW-1015">Disulfide bond</keyword>
<keyword id="KW-0379">Hydroxylation</keyword>
<keyword id="KW-0528">Neurotoxin</keyword>
<keyword id="KW-0964">Secreted</keyword>
<keyword id="KW-0732">Signal</keyword>
<keyword id="KW-0800">Toxin</keyword>
<evidence type="ECO:0000250" key="1"/>
<evidence type="ECO:0000250" key="2">
    <source>
        <dbReference type="UniProtKB" id="P0CI24"/>
    </source>
</evidence>
<evidence type="ECO:0000255" key="3"/>
<evidence type="ECO:0000305" key="4"/>